<reference key="1">
    <citation type="journal article" date="1995" name="J. Biol. Chem.">
        <title>Presence of isl-1-related LIM domain homeobox genes in teleost and their similar patterns of expression in brain and spinal cord.</title>
        <authorList>
            <person name="Gong Z."/>
            <person name="Hui C.-C."/>
            <person name="Hew C.-L."/>
        </authorList>
    </citation>
    <scope>NUCLEOTIDE SEQUENCE [MRNA] (ISOFORM 1)</scope>
    <source>
        <tissue>Pituitary</tissue>
    </source>
</reference>
<reference key="2">
    <citation type="journal article" date="1995" name="Biochim. Biophys. Acta">
        <title>Several splicing variants of isl-1 like genes in the chinook salmon (Oncorhynchus tschawytscha) encode truncated transcription factors containing a complete LIM domain.</title>
        <authorList>
            <person name="Gong Z."/>
            <person name="Hew C.-L."/>
        </authorList>
    </citation>
    <scope>NUCLEOTIDE SEQUENCE [MRNA] (ISOFORM 1)</scope>
    <scope>PARTIAL NUCLEOTIDE SEQUENCE (ISOFORM 2)</scope>
    <source>
        <tissue>Pituitary</tissue>
    </source>
</reference>
<sequence length="358" mass="40073">MVDIIFNSSFLGDMGDHSKKKSGIAMCVGCGSQIHDQYILRVAPDLEWHAACLKCAECSQYLDETCTCFVRDGKTYCKRDYVRLFGIKCANCNIGFCSSDLVMRARDNVYHMECFRCSVCSRHLLPGDEFSLRDEELLCRADHGLLMEQASAGSPLSPGIIHSRSLHIADPVSVRQPPHRNHVHKQSEKTTRVRTVLNEKQLHTLRTCYNANPRPDALMKEQLVEMTGLSPRVIRVWFQNKRCKDKKRSIFMKQLQQQHHSDKTNLQGLTGTPLVAGSPIRHDNTVQGNPVEVQTYQPPWKALSEFALQSDLDQPAFQQLVSFSESGSMGNSSGSDVTSLSSQLPDTPNSMVASPVDT</sequence>
<organism>
    <name type="scientific">Oncorhynchus tshawytscha</name>
    <name type="common">Chinook salmon</name>
    <name type="synonym">Salmo tshawytscha</name>
    <dbReference type="NCBI Taxonomy" id="74940"/>
    <lineage>
        <taxon>Eukaryota</taxon>
        <taxon>Metazoa</taxon>
        <taxon>Chordata</taxon>
        <taxon>Craniata</taxon>
        <taxon>Vertebrata</taxon>
        <taxon>Euteleostomi</taxon>
        <taxon>Actinopterygii</taxon>
        <taxon>Neopterygii</taxon>
        <taxon>Teleostei</taxon>
        <taxon>Protacanthopterygii</taxon>
        <taxon>Salmoniformes</taxon>
        <taxon>Salmonidae</taxon>
        <taxon>Salmoninae</taxon>
        <taxon>Oncorhynchus</taxon>
    </lineage>
</organism>
<feature type="chain" id="PRO_0000075757" description="Insulin gene enhancer protein ISL-2A">
    <location>
        <begin position="1"/>
        <end position="358"/>
    </location>
</feature>
<feature type="domain" description="LIM zinc-binding 1" evidence="2">
    <location>
        <begin position="27"/>
        <end position="80"/>
    </location>
</feature>
<feature type="domain" description="LIM zinc-binding 2" evidence="2">
    <location>
        <begin position="89"/>
        <end position="143"/>
    </location>
</feature>
<feature type="DNA-binding region" description="Homeobox" evidence="1">
    <location>
        <begin position="190"/>
        <end position="249"/>
    </location>
</feature>
<feature type="region of interest" description="Disordered" evidence="3">
    <location>
        <begin position="325"/>
        <end position="358"/>
    </location>
</feature>
<feature type="compositionally biased region" description="Low complexity" evidence="3">
    <location>
        <begin position="325"/>
        <end position="335"/>
    </location>
</feature>
<feature type="compositionally biased region" description="Polar residues" evidence="3">
    <location>
        <begin position="336"/>
        <end position="358"/>
    </location>
</feature>
<feature type="splice variant" id="VSP_003105" description="In isoform 2." evidence="4">
    <original>RLFGIKCANCNIGFCSSDLVMRARDNVYHMECF</original>
    <variation>SVLGARCAAGISCRGMSSLCGTRSCCVELIMVY</variation>
    <location>
        <begin position="83"/>
        <end position="115"/>
    </location>
</feature>
<feature type="splice variant" id="VSP_003106" description="In isoform 2." evidence="4">
    <location>
        <begin position="116"/>
        <end position="358"/>
    </location>
</feature>
<protein>
    <recommendedName>
        <fullName>Insulin gene enhancer protein ISL-2A</fullName>
        <shortName>Islet-2A</shortName>
    </recommendedName>
</protein>
<keyword id="KW-0025">Alternative splicing</keyword>
<keyword id="KW-0217">Developmental protein</keyword>
<keyword id="KW-0238">DNA-binding</keyword>
<keyword id="KW-0371">Homeobox</keyword>
<keyword id="KW-0440">LIM domain</keyword>
<keyword id="KW-0479">Metal-binding</keyword>
<keyword id="KW-0539">Nucleus</keyword>
<keyword id="KW-1185">Reference proteome</keyword>
<keyword id="KW-0677">Repeat</keyword>
<keyword id="KW-0862">Zinc</keyword>
<comment type="function">
    <text>Binds to one of the cis-acting domain of the insulin gene enhancer. May be involved in subtype specialization of primary motoneurons.</text>
</comment>
<comment type="subcellular location">
    <subcellularLocation>
        <location>Nucleus</location>
    </subcellularLocation>
</comment>
<comment type="alternative products">
    <event type="alternative splicing"/>
    <isoform>
        <id>P53408-1</id>
        <name>1</name>
        <name>Long</name>
        <sequence type="displayed"/>
    </isoform>
    <isoform>
        <id>P53408-2</id>
        <name>2</name>
        <name>Short</name>
        <sequence type="described" ref="VSP_003105 VSP_003106"/>
    </isoform>
</comment>
<evidence type="ECO:0000255" key="1">
    <source>
        <dbReference type="PROSITE-ProRule" id="PRU00108"/>
    </source>
</evidence>
<evidence type="ECO:0000255" key="2">
    <source>
        <dbReference type="PROSITE-ProRule" id="PRU00125"/>
    </source>
</evidence>
<evidence type="ECO:0000256" key="3">
    <source>
        <dbReference type="SAM" id="MobiDB-lite"/>
    </source>
</evidence>
<evidence type="ECO:0000305" key="4"/>
<proteinExistence type="evidence at transcript level"/>
<dbReference type="EMBL" id="X64885">
    <property type="protein sequence ID" value="CAA46103.1"/>
    <property type="status" value="ALT_TERM"/>
    <property type="molecule type" value="mRNA"/>
</dbReference>
<dbReference type="EMBL" id="X64882">
    <property type="status" value="NOT_ANNOTATED_CDS"/>
    <property type="molecule type" value="mRNA"/>
</dbReference>
<dbReference type="PIR" id="A55973">
    <property type="entry name" value="A55973"/>
</dbReference>
<dbReference type="BMRB" id="P53408"/>
<dbReference type="SMR" id="P53408"/>
<dbReference type="Proteomes" id="UP000694402">
    <property type="component" value="Unplaced"/>
</dbReference>
<dbReference type="GO" id="GO:0005634">
    <property type="term" value="C:nucleus"/>
    <property type="evidence" value="ECO:0007669"/>
    <property type="project" value="UniProtKB-SubCell"/>
</dbReference>
<dbReference type="GO" id="GO:0000987">
    <property type="term" value="F:cis-regulatory region sequence-specific DNA binding"/>
    <property type="evidence" value="ECO:0007669"/>
    <property type="project" value="TreeGrafter"/>
</dbReference>
<dbReference type="GO" id="GO:0000981">
    <property type="term" value="F:DNA-binding transcription factor activity, RNA polymerase II-specific"/>
    <property type="evidence" value="ECO:0007669"/>
    <property type="project" value="InterPro"/>
</dbReference>
<dbReference type="GO" id="GO:0046872">
    <property type="term" value="F:metal ion binding"/>
    <property type="evidence" value="ECO:0007669"/>
    <property type="project" value="UniProtKB-KW"/>
</dbReference>
<dbReference type="GO" id="GO:0007409">
    <property type="term" value="P:axonogenesis"/>
    <property type="evidence" value="ECO:0007669"/>
    <property type="project" value="TreeGrafter"/>
</dbReference>
<dbReference type="GO" id="GO:0048665">
    <property type="term" value="P:neuron fate specification"/>
    <property type="evidence" value="ECO:0007669"/>
    <property type="project" value="InterPro"/>
</dbReference>
<dbReference type="GO" id="GO:0045944">
    <property type="term" value="P:positive regulation of transcription by RNA polymerase II"/>
    <property type="evidence" value="ECO:0007669"/>
    <property type="project" value="InterPro"/>
</dbReference>
<dbReference type="CDD" id="cd00086">
    <property type="entry name" value="homeodomain"/>
    <property type="match status" value="1"/>
</dbReference>
<dbReference type="CDD" id="cd09366">
    <property type="entry name" value="LIM1_Isl"/>
    <property type="match status" value="1"/>
</dbReference>
<dbReference type="FunFam" id="2.10.110.10:FF:000034">
    <property type="entry name" value="Insulin gene enhancer protein ISL"/>
    <property type="match status" value="1"/>
</dbReference>
<dbReference type="FunFam" id="1.10.10.60:FF:000041">
    <property type="entry name" value="insulin gene enhancer protein ISL-1"/>
    <property type="match status" value="1"/>
</dbReference>
<dbReference type="FunFam" id="2.10.110.10:FF:000068">
    <property type="entry name" value="Insulin gene enhancer protein ISL-2"/>
    <property type="match status" value="1"/>
</dbReference>
<dbReference type="Gene3D" id="2.10.110.10">
    <property type="entry name" value="Cysteine Rich Protein"/>
    <property type="match status" value="2"/>
</dbReference>
<dbReference type="Gene3D" id="1.10.10.60">
    <property type="entry name" value="Homeodomain-like"/>
    <property type="match status" value="1"/>
</dbReference>
<dbReference type="InterPro" id="IPR001356">
    <property type="entry name" value="HD"/>
</dbReference>
<dbReference type="InterPro" id="IPR017970">
    <property type="entry name" value="Homeobox_CS"/>
</dbReference>
<dbReference type="InterPro" id="IPR009057">
    <property type="entry name" value="Homeodomain-like_sf"/>
</dbReference>
<dbReference type="InterPro" id="IPR047169">
    <property type="entry name" value="ISL1/2-like"/>
</dbReference>
<dbReference type="InterPro" id="IPR047244">
    <property type="entry name" value="ISL1/2-like_LIM1"/>
</dbReference>
<dbReference type="InterPro" id="IPR001781">
    <property type="entry name" value="Znf_LIM"/>
</dbReference>
<dbReference type="PANTHER" id="PTHR24204">
    <property type="entry name" value="INSULIN GENE ENHANCER PROTEIN"/>
    <property type="match status" value="1"/>
</dbReference>
<dbReference type="PANTHER" id="PTHR24204:SF2">
    <property type="entry name" value="INSULIN GENE ENHANCER PROTEIN ISL-2"/>
    <property type="match status" value="1"/>
</dbReference>
<dbReference type="Pfam" id="PF00046">
    <property type="entry name" value="Homeodomain"/>
    <property type="match status" value="1"/>
</dbReference>
<dbReference type="Pfam" id="PF00412">
    <property type="entry name" value="LIM"/>
    <property type="match status" value="2"/>
</dbReference>
<dbReference type="SMART" id="SM00389">
    <property type="entry name" value="HOX"/>
    <property type="match status" value="1"/>
</dbReference>
<dbReference type="SMART" id="SM00132">
    <property type="entry name" value="LIM"/>
    <property type="match status" value="2"/>
</dbReference>
<dbReference type="SUPFAM" id="SSF57716">
    <property type="entry name" value="Glucocorticoid receptor-like (DNA-binding domain)"/>
    <property type="match status" value="2"/>
</dbReference>
<dbReference type="SUPFAM" id="SSF46689">
    <property type="entry name" value="Homeodomain-like"/>
    <property type="match status" value="1"/>
</dbReference>
<dbReference type="PROSITE" id="PS00027">
    <property type="entry name" value="HOMEOBOX_1"/>
    <property type="match status" value="1"/>
</dbReference>
<dbReference type="PROSITE" id="PS50071">
    <property type="entry name" value="HOMEOBOX_2"/>
    <property type="match status" value="1"/>
</dbReference>
<dbReference type="PROSITE" id="PS00478">
    <property type="entry name" value="LIM_DOMAIN_1"/>
    <property type="match status" value="2"/>
</dbReference>
<dbReference type="PROSITE" id="PS50023">
    <property type="entry name" value="LIM_DOMAIN_2"/>
    <property type="match status" value="2"/>
</dbReference>
<accession>P53408</accession>
<name>ISL2A_ONCTS</name>
<gene>
    <name type="primary">isl2a</name>
</gene>